<sequence length="434" mass="47627">MQVSVEATQGLERRLTISVPAEQIEKLVKDSLQREAKRARIPGFRPGKVPVTVINKRYGAAIRQDITGEVMQRNFIEAIIAEKLNPAGAPTFVPGATDGEKFEFVATFEIYPEVELKGLDAIEVEQPKASVTDADVDSMIETLRKQHATFAAVEREAADGDKVKMNFVGSVDGVEFEGGKADDFELQLGSGRMIPGFEAGILGHKAGEEFVIDVTFPEEYHAENLKGKAAKFAITLTEVLAANLPEVNDEFAALFGISEGGLEALKTEIRKNMNRELEQALKANVKEQVINGLLANNDIELPKALIDGEVNVLRQQAMQRFGGQTANMPELPAELFTEQAARRVKIGLLLGEVIKTNELKAEDERVQALIASMASAYEDPSEVVAYYNSNKELMQNMRNVALEEQAVEALLKSAKVTEKEVAFEEFMNKATGRA</sequence>
<keyword id="KW-0131">Cell cycle</keyword>
<keyword id="KW-0132">Cell division</keyword>
<keyword id="KW-0143">Chaperone</keyword>
<keyword id="KW-0963">Cytoplasm</keyword>
<keyword id="KW-0413">Isomerase</keyword>
<keyword id="KW-0697">Rotamase</keyword>
<reference key="1">
    <citation type="submission" date="2006-08" db="EMBL/GenBank/DDBJ databases">
        <title>Complete sequence of chromosome 1 of Shewanella sp. MR-7.</title>
        <authorList>
            <person name="Copeland A."/>
            <person name="Lucas S."/>
            <person name="Lapidus A."/>
            <person name="Barry K."/>
            <person name="Detter J.C."/>
            <person name="Glavina del Rio T."/>
            <person name="Hammon N."/>
            <person name="Israni S."/>
            <person name="Dalin E."/>
            <person name="Tice H."/>
            <person name="Pitluck S."/>
            <person name="Kiss H."/>
            <person name="Brettin T."/>
            <person name="Bruce D."/>
            <person name="Han C."/>
            <person name="Tapia R."/>
            <person name="Gilna P."/>
            <person name="Schmutz J."/>
            <person name="Larimer F."/>
            <person name="Land M."/>
            <person name="Hauser L."/>
            <person name="Kyrpides N."/>
            <person name="Mikhailova N."/>
            <person name="Nealson K."/>
            <person name="Konstantinidis K."/>
            <person name="Klappenbach J."/>
            <person name="Tiedje J."/>
            <person name="Richardson P."/>
        </authorList>
    </citation>
    <scope>NUCLEOTIDE SEQUENCE [LARGE SCALE GENOMIC DNA]</scope>
    <source>
        <strain>MR-7</strain>
    </source>
</reference>
<name>TIG_SHESR</name>
<organism>
    <name type="scientific">Shewanella sp. (strain MR-7)</name>
    <dbReference type="NCBI Taxonomy" id="60481"/>
    <lineage>
        <taxon>Bacteria</taxon>
        <taxon>Pseudomonadati</taxon>
        <taxon>Pseudomonadota</taxon>
        <taxon>Gammaproteobacteria</taxon>
        <taxon>Alteromonadales</taxon>
        <taxon>Shewanellaceae</taxon>
        <taxon>Shewanella</taxon>
    </lineage>
</organism>
<gene>
    <name evidence="1" type="primary">tig</name>
    <name type="ordered locus">Shewmr7_2564</name>
</gene>
<evidence type="ECO:0000255" key="1">
    <source>
        <dbReference type="HAMAP-Rule" id="MF_00303"/>
    </source>
</evidence>
<accession>Q0HTK6</accession>
<protein>
    <recommendedName>
        <fullName evidence="1">Trigger factor</fullName>
        <shortName evidence="1">TF</shortName>
        <ecNumber evidence="1">5.2.1.8</ecNumber>
    </recommendedName>
    <alternativeName>
        <fullName evidence="1">PPIase</fullName>
    </alternativeName>
</protein>
<proteinExistence type="inferred from homology"/>
<comment type="function">
    <text evidence="1">Involved in protein export. Acts as a chaperone by maintaining the newly synthesized protein in an open conformation. Functions as a peptidyl-prolyl cis-trans isomerase.</text>
</comment>
<comment type="catalytic activity">
    <reaction evidence="1">
        <text>[protein]-peptidylproline (omega=180) = [protein]-peptidylproline (omega=0)</text>
        <dbReference type="Rhea" id="RHEA:16237"/>
        <dbReference type="Rhea" id="RHEA-COMP:10747"/>
        <dbReference type="Rhea" id="RHEA-COMP:10748"/>
        <dbReference type="ChEBI" id="CHEBI:83833"/>
        <dbReference type="ChEBI" id="CHEBI:83834"/>
        <dbReference type="EC" id="5.2.1.8"/>
    </reaction>
</comment>
<comment type="subcellular location">
    <subcellularLocation>
        <location>Cytoplasm</location>
    </subcellularLocation>
    <text evidence="1">About half TF is bound to the ribosome near the polypeptide exit tunnel while the other half is free in the cytoplasm.</text>
</comment>
<comment type="domain">
    <text evidence="1">Consists of 3 domains; the N-terminus binds the ribosome, the middle domain has PPIase activity, while the C-terminus has intrinsic chaperone activity on its own.</text>
</comment>
<comment type="similarity">
    <text evidence="1">Belongs to the FKBP-type PPIase family. Tig subfamily.</text>
</comment>
<feature type="chain" id="PRO_1000022760" description="Trigger factor">
    <location>
        <begin position="1"/>
        <end position="434"/>
    </location>
</feature>
<feature type="domain" description="PPIase FKBP-type" evidence="1">
    <location>
        <begin position="160"/>
        <end position="245"/>
    </location>
</feature>
<dbReference type="EC" id="5.2.1.8" evidence="1"/>
<dbReference type="EMBL" id="CP000444">
    <property type="protein sequence ID" value="ABI43549.1"/>
    <property type="molecule type" value="Genomic_DNA"/>
</dbReference>
<dbReference type="SMR" id="Q0HTK6"/>
<dbReference type="KEGG" id="shm:Shewmr7_2564"/>
<dbReference type="HOGENOM" id="CLU_033058_2_0_6"/>
<dbReference type="GO" id="GO:0005737">
    <property type="term" value="C:cytoplasm"/>
    <property type="evidence" value="ECO:0007669"/>
    <property type="project" value="UniProtKB-SubCell"/>
</dbReference>
<dbReference type="GO" id="GO:0003755">
    <property type="term" value="F:peptidyl-prolyl cis-trans isomerase activity"/>
    <property type="evidence" value="ECO:0007669"/>
    <property type="project" value="UniProtKB-UniRule"/>
</dbReference>
<dbReference type="GO" id="GO:0044183">
    <property type="term" value="F:protein folding chaperone"/>
    <property type="evidence" value="ECO:0007669"/>
    <property type="project" value="TreeGrafter"/>
</dbReference>
<dbReference type="GO" id="GO:0043022">
    <property type="term" value="F:ribosome binding"/>
    <property type="evidence" value="ECO:0007669"/>
    <property type="project" value="TreeGrafter"/>
</dbReference>
<dbReference type="GO" id="GO:0051083">
    <property type="term" value="P:'de novo' cotranslational protein folding"/>
    <property type="evidence" value="ECO:0007669"/>
    <property type="project" value="TreeGrafter"/>
</dbReference>
<dbReference type="GO" id="GO:0051301">
    <property type="term" value="P:cell division"/>
    <property type="evidence" value="ECO:0007669"/>
    <property type="project" value="UniProtKB-KW"/>
</dbReference>
<dbReference type="GO" id="GO:0061077">
    <property type="term" value="P:chaperone-mediated protein folding"/>
    <property type="evidence" value="ECO:0007669"/>
    <property type="project" value="TreeGrafter"/>
</dbReference>
<dbReference type="GO" id="GO:0015031">
    <property type="term" value="P:protein transport"/>
    <property type="evidence" value="ECO:0007669"/>
    <property type="project" value="UniProtKB-UniRule"/>
</dbReference>
<dbReference type="GO" id="GO:0043335">
    <property type="term" value="P:protein unfolding"/>
    <property type="evidence" value="ECO:0007669"/>
    <property type="project" value="TreeGrafter"/>
</dbReference>
<dbReference type="FunFam" id="3.10.50.40:FF:000001">
    <property type="entry name" value="Trigger factor"/>
    <property type="match status" value="1"/>
</dbReference>
<dbReference type="Gene3D" id="3.10.50.40">
    <property type="match status" value="1"/>
</dbReference>
<dbReference type="Gene3D" id="3.30.70.1050">
    <property type="entry name" value="Trigger factor ribosome-binding domain"/>
    <property type="match status" value="1"/>
</dbReference>
<dbReference type="Gene3D" id="1.10.3120.10">
    <property type="entry name" value="Trigger factor, C-terminal domain"/>
    <property type="match status" value="1"/>
</dbReference>
<dbReference type="HAMAP" id="MF_00303">
    <property type="entry name" value="Trigger_factor_Tig"/>
    <property type="match status" value="1"/>
</dbReference>
<dbReference type="InterPro" id="IPR046357">
    <property type="entry name" value="PPIase_dom_sf"/>
</dbReference>
<dbReference type="InterPro" id="IPR001179">
    <property type="entry name" value="PPIase_FKBP_dom"/>
</dbReference>
<dbReference type="InterPro" id="IPR005215">
    <property type="entry name" value="Trig_fac"/>
</dbReference>
<dbReference type="InterPro" id="IPR008880">
    <property type="entry name" value="Trigger_fac_C"/>
</dbReference>
<dbReference type="InterPro" id="IPR037041">
    <property type="entry name" value="Trigger_fac_C_sf"/>
</dbReference>
<dbReference type="InterPro" id="IPR008881">
    <property type="entry name" value="Trigger_fac_ribosome-bd_bac"/>
</dbReference>
<dbReference type="InterPro" id="IPR036611">
    <property type="entry name" value="Trigger_fac_ribosome-bd_sf"/>
</dbReference>
<dbReference type="InterPro" id="IPR027304">
    <property type="entry name" value="Trigger_fact/SurA_dom_sf"/>
</dbReference>
<dbReference type="NCBIfam" id="TIGR00115">
    <property type="entry name" value="tig"/>
    <property type="match status" value="1"/>
</dbReference>
<dbReference type="PANTHER" id="PTHR30560">
    <property type="entry name" value="TRIGGER FACTOR CHAPERONE AND PEPTIDYL-PROLYL CIS/TRANS ISOMERASE"/>
    <property type="match status" value="1"/>
</dbReference>
<dbReference type="PANTHER" id="PTHR30560:SF3">
    <property type="entry name" value="TRIGGER FACTOR-LIKE PROTEIN TIG, CHLOROPLASTIC"/>
    <property type="match status" value="1"/>
</dbReference>
<dbReference type="Pfam" id="PF00254">
    <property type="entry name" value="FKBP_C"/>
    <property type="match status" value="1"/>
</dbReference>
<dbReference type="Pfam" id="PF05698">
    <property type="entry name" value="Trigger_C"/>
    <property type="match status" value="1"/>
</dbReference>
<dbReference type="Pfam" id="PF05697">
    <property type="entry name" value="Trigger_N"/>
    <property type="match status" value="1"/>
</dbReference>
<dbReference type="PIRSF" id="PIRSF003095">
    <property type="entry name" value="Trigger_factor"/>
    <property type="match status" value="1"/>
</dbReference>
<dbReference type="SUPFAM" id="SSF54534">
    <property type="entry name" value="FKBP-like"/>
    <property type="match status" value="1"/>
</dbReference>
<dbReference type="SUPFAM" id="SSF109998">
    <property type="entry name" value="Triger factor/SurA peptide-binding domain-like"/>
    <property type="match status" value="1"/>
</dbReference>
<dbReference type="SUPFAM" id="SSF102735">
    <property type="entry name" value="Trigger factor ribosome-binding domain"/>
    <property type="match status" value="1"/>
</dbReference>
<dbReference type="PROSITE" id="PS50059">
    <property type="entry name" value="FKBP_PPIASE"/>
    <property type="match status" value="1"/>
</dbReference>